<proteinExistence type="inferred from homology"/>
<reference key="1">
    <citation type="journal article" date="2004" name="Nature">
        <title>Genome evolution in yeasts.</title>
        <authorList>
            <person name="Dujon B."/>
            <person name="Sherman D."/>
            <person name="Fischer G."/>
            <person name="Durrens P."/>
            <person name="Casaregola S."/>
            <person name="Lafontaine I."/>
            <person name="de Montigny J."/>
            <person name="Marck C."/>
            <person name="Neuveglise C."/>
            <person name="Talla E."/>
            <person name="Goffard N."/>
            <person name="Frangeul L."/>
            <person name="Aigle M."/>
            <person name="Anthouard V."/>
            <person name="Babour A."/>
            <person name="Barbe V."/>
            <person name="Barnay S."/>
            <person name="Blanchin S."/>
            <person name="Beckerich J.-M."/>
            <person name="Beyne E."/>
            <person name="Bleykasten C."/>
            <person name="Boisrame A."/>
            <person name="Boyer J."/>
            <person name="Cattolico L."/>
            <person name="Confanioleri F."/>
            <person name="de Daruvar A."/>
            <person name="Despons L."/>
            <person name="Fabre E."/>
            <person name="Fairhead C."/>
            <person name="Ferry-Dumazet H."/>
            <person name="Groppi A."/>
            <person name="Hantraye F."/>
            <person name="Hennequin C."/>
            <person name="Jauniaux N."/>
            <person name="Joyet P."/>
            <person name="Kachouri R."/>
            <person name="Kerrest A."/>
            <person name="Koszul R."/>
            <person name="Lemaire M."/>
            <person name="Lesur I."/>
            <person name="Ma L."/>
            <person name="Muller H."/>
            <person name="Nicaud J.-M."/>
            <person name="Nikolski M."/>
            <person name="Oztas S."/>
            <person name="Ozier-Kalogeropoulos O."/>
            <person name="Pellenz S."/>
            <person name="Potier S."/>
            <person name="Richard G.-F."/>
            <person name="Straub M.-L."/>
            <person name="Suleau A."/>
            <person name="Swennen D."/>
            <person name="Tekaia F."/>
            <person name="Wesolowski-Louvel M."/>
            <person name="Westhof E."/>
            <person name="Wirth B."/>
            <person name="Zeniou-Meyer M."/>
            <person name="Zivanovic Y."/>
            <person name="Bolotin-Fukuhara M."/>
            <person name="Thierry A."/>
            <person name="Bouchier C."/>
            <person name="Caudron B."/>
            <person name="Scarpelli C."/>
            <person name="Gaillardin C."/>
            <person name="Weissenbach J."/>
            <person name="Wincker P."/>
            <person name="Souciet J.-L."/>
        </authorList>
    </citation>
    <scope>NUCLEOTIDE SEQUENCE [LARGE SCALE GENOMIC DNA]</scope>
    <source>
        <strain>CLIB 122 / E 150</strain>
    </source>
</reference>
<dbReference type="EMBL" id="CR382130">
    <property type="protein sequence ID" value="CAG80573.1"/>
    <property type="molecule type" value="Genomic_DNA"/>
</dbReference>
<dbReference type="RefSeq" id="XP_502385.1">
    <property type="nucleotide sequence ID" value="XM_502385.1"/>
</dbReference>
<dbReference type="SMR" id="Q6CAC7"/>
<dbReference type="FunCoup" id="Q6CAC7">
    <property type="interactions" value="965"/>
</dbReference>
<dbReference type="STRING" id="284591.Q6CAC7"/>
<dbReference type="EnsemblFungi" id="CAG80573">
    <property type="protein sequence ID" value="CAG80573"/>
    <property type="gene ID" value="YALI0_D04004g"/>
</dbReference>
<dbReference type="KEGG" id="yli:2910597"/>
<dbReference type="VEuPathDB" id="FungiDB:YALI0_D04004g"/>
<dbReference type="HOGENOM" id="CLU_034754_2_1_1"/>
<dbReference type="InParanoid" id="Q6CAC7"/>
<dbReference type="OMA" id="CLLHPPH"/>
<dbReference type="OrthoDB" id="123141at4891"/>
<dbReference type="Proteomes" id="UP000001300">
    <property type="component" value="Chromosome D"/>
</dbReference>
<dbReference type="GO" id="GO:1990508">
    <property type="term" value="C:CKM complex"/>
    <property type="evidence" value="ECO:0007669"/>
    <property type="project" value="EnsemblFungi"/>
</dbReference>
<dbReference type="GO" id="GO:0016592">
    <property type="term" value="C:mediator complex"/>
    <property type="evidence" value="ECO:0000318"/>
    <property type="project" value="GO_Central"/>
</dbReference>
<dbReference type="GO" id="GO:0005634">
    <property type="term" value="C:nucleus"/>
    <property type="evidence" value="ECO:0000318"/>
    <property type="project" value="GO_Central"/>
</dbReference>
<dbReference type="GO" id="GO:0016538">
    <property type="term" value="F:cyclin-dependent protein serine/threonine kinase regulator activity"/>
    <property type="evidence" value="ECO:0000318"/>
    <property type="project" value="GO_Central"/>
</dbReference>
<dbReference type="GO" id="GO:0000979">
    <property type="term" value="F:RNA polymerase II core promoter sequence-specific DNA binding"/>
    <property type="evidence" value="ECO:0007669"/>
    <property type="project" value="EnsemblFungi"/>
</dbReference>
<dbReference type="GO" id="GO:0034605">
    <property type="term" value="P:cellular response to heat"/>
    <property type="evidence" value="ECO:0007669"/>
    <property type="project" value="EnsemblFungi"/>
</dbReference>
<dbReference type="GO" id="GO:0051321">
    <property type="term" value="P:meiotic cell cycle"/>
    <property type="evidence" value="ECO:0007669"/>
    <property type="project" value="EnsemblFungi"/>
</dbReference>
<dbReference type="GO" id="GO:0000122">
    <property type="term" value="P:negative regulation of transcription by RNA polymerase II"/>
    <property type="evidence" value="ECO:0007669"/>
    <property type="project" value="EnsemblFungi"/>
</dbReference>
<dbReference type="GO" id="GO:0000411">
    <property type="term" value="P:positive regulation of transcription by galactose"/>
    <property type="evidence" value="ECO:0007669"/>
    <property type="project" value="EnsemblFungi"/>
</dbReference>
<dbReference type="GO" id="GO:0045944">
    <property type="term" value="P:positive regulation of transcription by RNA polymerase II"/>
    <property type="evidence" value="ECO:0000318"/>
    <property type="project" value="GO_Central"/>
</dbReference>
<dbReference type="CDD" id="cd20513">
    <property type="entry name" value="CYCLIN_CCNC_rpt1"/>
    <property type="match status" value="1"/>
</dbReference>
<dbReference type="CDD" id="cd20546">
    <property type="entry name" value="CYCLIN_SpCG1C_ScCTK2-like_rpt2"/>
    <property type="match status" value="1"/>
</dbReference>
<dbReference type="FunFam" id="1.10.472.10:FF:000117">
    <property type="entry name" value="Mediator complex subunit"/>
    <property type="match status" value="1"/>
</dbReference>
<dbReference type="Gene3D" id="1.10.472.10">
    <property type="entry name" value="Cyclin-like"/>
    <property type="match status" value="2"/>
</dbReference>
<dbReference type="InterPro" id="IPR013763">
    <property type="entry name" value="Cyclin-like_dom"/>
</dbReference>
<dbReference type="InterPro" id="IPR036915">
    <property type="entry name" value="Cyclin-like_sf"/>
</dbReference>
<dbReference type="InterPro" id="IPR043198">
    <property type="entry name" value="Cyclin/Ssn8"/>
</dbReference>
<dbReference type="InterPro" id="IPR006671">
    <property type="entry name" value="Cyclin_N"/>
</dbReference>
<dbReference type="PANTHER" id="PTHR10026">
    <property type="entry name" value="CYCLIN"/>
    <property type="match status" value="1"/>
</dbReference>
<dbReference type="Pfam" id="PF00134">
    <property type="entry name" value="Cyclin_N"/>
    <property type="match status" value="1"/>
</dbReference>
<dbReference type="PIRSF" id="PIRSF028758">
    <property type="entry name" value="Cyclin, C/H/G types"/>
    <property type="match status" value="1"/>
</dbReference>
<dbReference type="SMART" id="SM00385">
    <property type="entry name" value="CYCLIN"/>
    <property type="match status" value="1"/>
</dbReference>
<dbReference type="SUPFAM" id="SSF47954">
    <property type="entry name" value="Cyclin-like"/>
    <property type="match status" value="2"/>
</dbReference>
<evidence type="ECO:0000250" key="1"/>
<evidence type="ECO:0000305" key="2"/>
<comment type="function">
    <text evidence="1">Component of the SRB8-11 complex. The SRB8-11 complex is a regulatory module of the Mediator complex which is itself involved in regulation of basal and activated RNA polymerase II-dependent transcription. The SRB8-11 complex may be involved in the transcriptional repression of a subset of genes regulated by Mediator. It may inhibit the association of the Mediator complex with RNA polymerase II to form the holoenzyme complex. The SRB8-11 complex phosphorylates the C-terminal domain (CTD) of the largest subunit of RNA polymerase II (By similarity).</text>
</comment>
<comment type="subunit">
    <text evidence="1">Component of the SRB8-11 complex, a regulatory module of the Mediator complex.</text>
</comment>
<comment type="subcellular location">
    <subcellularLocation>
        <location evidence="2">Nucleus</location>
    </subcellularLocation>
</comment>
<comment type="similarity">
    <text evidence="2">Belongs to the cyclin family. Cyclin C subfamily.</text>
</comment>
<name>SSN8_YARLI</name>
<accession>Q6CAC7</accession>
<protein>
    <recommendedName>
        <fullName>RNA polymerase II holoenzyme cyclin-like subunit</fullName>
    </recommendedName>
</protein>
<gene>
    <name type="primary">SSN8</name>
    <name type="ordered locus">YALI0D04004g</name>
</gene>
<sequence>MSANYWTSSQRLHWLLTKETLAERRKGLEDIFDPGKLQTIKALNPWHVRVYLHTLIHLLGQNLSIRQRILATAEVYLTRFHTKVPFGEINPYLVVATAVYVACKVEEHPQHIRTITSEARSLWPDYISHDPTKIAECEFYLIEELGTYLVIFHPYKSLMQISDAMARSNAQITMAPEEIQVTWSMINDSYITDLHLLNPPHIVAMACIYMTVVLRSHIMRMTMPSEAVKSRIEAFMTFFGESNVDLEQTIDCVQEMISLYVNWDTYSEKQCRVEIAKVIT</sequence>
<organism>
    <name type="scientific">Yarrowia lipolytica (strain CLIB 122 / E 150)</name>
    <name type="common">Yeast</name>
    <name type="synonym">Candida lipolytica</name>
    <dbReference type="NCBI Taxonomy" id="284591"/>
    <lineage>
        <taxon>Eukaryota</taxon>
        <taxon>Fungi</taxon>
        <taxon>Dikarya</taxon>
        <taxon>Ascomycota</taxon>
        <taxon>Saccharomycotina</taxon>
        <taxon>Dipodascomycetes</taxon>
        <taxon>Dipodascales</taxon>
        <taxon>Dipodascales incertae sedis</taxon>
        <taxon>Yarrowia</taxon>
    </lineage>
</organism>
<keyword id="KW-0010">Activator</keyword>
<keyword id="KW-0195">Cyclin</keyword>
<keyword id="KW-0539">Nucleus</keyword>
<keyword id="KW-1185">Reference proteome</keyword>
<keyword id="KW-0678">Repressor</keyword>
<keyword id="KW-0804">Transcription</keyword>
<keyword id="KW-0805">Transcription regulation</keyword>
<feature type="chain" id="PRO_0000314282" description="RNA polymerase II holoenzyme cyclin-like subunit">
    <location>
        <begin position="1"/>
        <end position="280"/>
    </location>
</feature>
<feature type="domain" description="Cyclin N-terminal">
    <location>
        <begin position="23"/>
        <end position="150"/>
    </location>
</feature>